<evidence type="ECO:0000250" key="1"/>
<evidence type="ECO:0000255" key="2">
    <source>
        <dbReference type="PROSITE-ProRule" id="PRU00362"/>
    </source>
</evidence>
<evidence type="ECO:0000255" key="3">
    <source>
        <dbReference type="PROSITE-ProRule" id="PRU00434"/>
    </source>
</evidence>
<evidence type="ECO:0000255" key="4">
    <source>
        <dbReference type="PROSITE-ProRule" id="PRU00441"/>
    </source>
</evidence>
<evidence type="ECO:0000269" key="5">
    <source>
    </source>
</evidence>
<evidence type="ECO:0000305" key="6"/>
<organism>
    <name type="scientific">Bordetella pertussis (strain ATCC 9797 / DSM 5571 / CCUG 30873 / LMG 14455 / NCTC 10739 / 18323)</name>
    <dbReference type="NCBI Taxonomy" id="568706"/>
    <lineage>
        <taxon>Bacteria</taxon>
        <taxon>Pseudomonadati</taxon>
        <taxon>Pseudomonadota</taxon>
        <taxon>Betaproteobacteria</taxon>
        <taxon>Burkholderiales</taxon>
        <taxon>Alcaligenaceae</taxon>
        <taxon>Bordetella</taxon>
    </lineage>
</organism>
<protein>
    <recommendedName>
        <fullName>Cyclolysin secretion/processing ATP-binding protein CyaB</fullName>
        <ecNumber>3.4.22.-</ecNumber>
        <ecNumber>7.6.2.-</ecNumber>
    </recommendedName>
</protein>
<keyword id="KW-0067">ATP-binding</keyword>
<keyword id="KW-1003">Cell membrane</keyword>
<keyword id="KW-0204">Cytolysis</keyword>
<keyword id="KW-0354">Hemolysis</keyword>
<keyword id="KW-0378">Hydrolase</keyword>
<keyword id="KW-0472">Membrane</keyword>
<keyword id="KW-0547">Nucleotide-binding</keyword>
<keyword id="KW-0645">Protease</keyword>
<keyword id="KW-0788">Thiol protease</keyword>
<keyword id="KW-1278">Translocase</keyword>
<keyword id="KW-0812">Transmembrane</keyword>
<keyword id="KW-1133">Transmembrane helix</keyword>
<keyword id="KW-0813">Transport</keyword>
<gene>
    <name type="primary">cyaB</name>
    <name type="ordered locus">BN118_0469</name>
</gene>
<comment type="function">
    <text evidence="5">Involved in the export of calmodulin-sensitive adenylate cyclase-hemolysin (cyclolysin).</text>
</comment>
<comment type="subcellular location">
    <subcellularLocation>
        <location evidence="1">Cell membrane</location>
        <topology evidence="4">Multi-pass membrane protein</topology>
    </subcellularLocation>
</comment>
<comment type="similarity">
    <text evidence="6">Belongs to the ABC transporter superfamily. Cyclolysin exporter (TC 3.A.1.109.2) family.</text>
</comment>
<name>CYAB_BORP1</name>
<feature type="chain" id="PRO_0000421302" description="Cyclolysin secretion/processing ATP-binding protein CyaB">
    <location>
        <begin position="1"/>
        <end position="712"/>
    </location>
</feature>
<feature type="transmembrane region" description="Helical" evidence="4">
    <location>
        <begin position="160"/>
        <end position="180"/>
    </location>
</feature>
<feature type="transmembrane region" description="Helical" evidence="4">
    <location>
        <begin position="194"/>
        <end position="214"/>
    </location>
</feature>
<feature type="transmembrane region" description="Helical" evidence="4">
    <location>
        <begin position="272"/>
        <end position="292"/>
    </location>
</feature>
<feature type="transmembrane region" description="Helical" evidence="4">
    <location>
        <begin position="298"/>
        <end position="318"/>
    </location>
</feature>
<feature type="transmembrane region" description="Helical" evidence="4">
    <location>
        <begin position="367"/>
        <end position="387"/>
    </location>
</feature>
<feature type="transmembrane region" description="Helical" evidence="4">
    <location>
        <begin position="390"/>
        <end position="410"/>
    </location>
</feature>
<feature type="domain" description="Peptidase C39" evidence="2">
    <location>
        <begin position="7"/>
        <end position="128"/>
    </location>
</feature>
<feature type="domain" description="ABC transmembrane type-1" evidence="4">
    <location>
        <begin position="157"/>
        <end position="439"/>
    </location>
</feature>
<feature type="domain" description="ABC transporter" evidence="2 3">
    <location>
        <begin position="471"/>
        <end position="706"/>
    </location>
</feature>
<feature type="binding site" evidence="2 3">
    <location>
        <begin position="505"/>
        <end position="512"/>
    </location>
    <ligand>
        <name>ATP</name>
        <dbReference type="ChEBI" id="CHEBI:30616"/>
    </ligand>
</feature>
<feature type="sequence conflict" description="In Ref. 1; CAA32412." evidence="6" ref="1">
    <original>A</original>
    <variation>VP</variation>
    <location>
        <position position="90"/>
    </location>
</feature>
<feature type="sequence conflict" description="In Ref. 1; CAA32412." evidence="6" ref="1">
    <original>A</original>
    <variation>T</variation>
    <location>
        <position position="198"/>
    </location>
</feature>
<feature type="sequence conflict" description="In Ref. 1; CAA32412." evidence="6" ref="1">
    <original>D</original>
    <variation>H</variation>
    <location>
        <position position="323"/>
    </location>
</feature>
<feature type="sequence conflict" description="In Ref. 1; CAA32412." evidence="6" ref="1">
    <original>VALGVLWVGATEVVAQ</original>
    <variation>LRWESCGWAHRGGRA</variation>
    <location>
        <begin position="391"/>
        <end position="406"/>
    </location>
</feature>
<accession>P0DKX6</accession>
<accession>P18770</accession>
<reference key="1">
    <citation type="journal article" date="1988" name="EMBO J.">
        <title>Secretion of cyclolysin, the calmodulin-sensitive adenylate cyclase-haemolysin bifunctional protein of Bordetella pertussis.</title>
        <authorList>
            <person name="Glaser P."/>
            <person name="Sakamoto H."/>
            <person name="Bellalou J."/>
            <person name="Ullmann A."/>
            <person name="Danchin A."/>
        </authorList>
    </citation>
    <scope>NUCLEOTIDE SEQUENCE [GENOMIC DNA]</scope>
    <scope>FUNCTION</scope>
    <source>
        <strain>ATCC 9797 / DSM 5571 / CCUG 30873 / LMG 14455 / NCTC 10739 / 18323</strain>
    </source>
</reference>
<reference key="2">
    <citation type="journal article" date="2012" name="BMC Genomics">
        <title>Comparative genomics of the classical Bordetella subspecies: the evolution and exchange of virulence-associated diversity amongst closely related pathogens.</title>
        <authorList>
            <person name="Park J."/>
            <person name="Zhang Y."/>
            <person name="Buboltz A.M."/>
            <person name="Zhang X."/>
            <person name="Schuster S.C."/>
            <person name="Ahuja U."/>
            <person name="Liu M."/>
            <person name="Miller J.F."/>
            <person name="Sebaihia M."/>
            <person name="Bentley S.D."/>
            <person name="Parkhill J."/>
            <person name="Harvill E.T."/>
        </authorList>
    </citation>
    <scope>NUCLEOTIDE SEQUENCE [LARGE SCALE GENOMIC DNA]</scope>
    <source>
        <strain>ATCC 9797 / DSM 5571 / CCUG 30873 / LMG 14455 / NCTC 10739 / 18323</strain>
    </source>
</reference>
<proteinExistence type="inferred from homology"/>
<dbReference type="EC" id="3.4.22.-"/>
<dbReference type="EC" id="7.6.2.-"/>
<dbReference type="EMBL" id="X14199">
    <property type="protein sequence ID" value="CAA32412.1"/>
    <property type="molecule type" value="Genomic_DNA"/>
</dbReference>
<dbReference type="EMBL" id="HE965805">
    <property type="status" value="NOT_ANNOTATED_CDS"/>
    <property type="molecule type" value="Genomic_DNA"/>
</dbReference>
<dbReference type="PIR" id="S02386">
    <property type="entry name" value="BVBRCB"/>
</dbReference>
<dbReference type="RefSeq" id="WP_041166126.1">
    <property type="nucleotide sequence ID" value="NC_018518.1"/>
</dbReference>
<dbReference type="SMR" id="P0DKX6"/>
<dbReference type="Proteomes" id="UP000005250">
    <property type="component" value="Chromosome"/>
</dbReference>
<dbReference type="GO" id="GO:0005886">
    <property type="term" value="C:plasma membrane"/>
    <property type="evidence" value="ECO:0007669"/>
    <property type="project" value="UniProtKB-SubCell"/>
</dbReference>
<dbReference type="GO" id="GO:0030256">
    <property type="term" value="C:type I protein secretion system complex"/>
    <property type="evidence" value="ECO:0007669"/>
    <property type="project" value="InterPro"/>
</dbReference>
<dbReference type="GO" id="GO:0140359">
    <property type="term" value="F:ABC-type transporter activity"/>
    <property type="evidence" value="ECO:0007669"/>
    <property type="project" value="InterPro"/>
</dbReference>
<dbReference type="GO" id="GO:0005524">
    <property type="term" value="F:ATP binding"/>
    <property type="evidence" value="ECO:0007669"/>
    <property type="project" value="UniProtKB-KW"/>
</dbReference>
<dbReference type="GO" id="GO:0016887">
    <property type="term" value="F:ATP hydrolysis activity"/>
    <property type="evidence" value="ECO:0007669"/>
    <property type="project" value="InterPro"/>
</dbReference>
<dbReference type="GO" id="GO:0034040">
    <property type="term" value="F:ATPase-coupled lipid transmembrane transporter activity"/>
    <property type="evidence" value="ECO:0007669"/>
    <property type="project" value="TreeGrafter"/>
</dbReference>
<dbReference type="GO" id="GO:0008234">
    <property type="term" value="F:cysteine-type peptidase activity"/>
    <property type="evidence" value="ECO:0007669"/>
    <property type="project" value="UniProtKB-KW"/>
</dbReference>
<dbReference type="GO" id="GO:0031640">
    <property type="term" value="P:killing of cells of another organism"/>
    <property type="evidence" value="ECO:0007669"/>
    <property type="project" value="UniProtKB-KW"/>
</dbReference>
<dbReference type="GO" id="GO:0030253">
    <property type="term" value="P:protein secretion by the type I secretion system"/>
    <property type="evidence" value="ECO:0007669"/>
    <property type="project" value="InterPro"/>
</dbReference>
<dbReference type="GO" id="GO:0006508">
    <property type="term" value="P:proteolysis"/>
    <property type="evidence" value="ECO:0007669"/>
    <property type="project" value="UniProtKB-KW"/>
</dbReference>
<dbReference type="CDD" id="cd18588">
    <property type="entry name" value="ABC_6TM_CyaB_HlyB_like"/>
    <property type="match status" value="1"/>
</dbReference>
<dbReference type="CDD" id="cd03252">
    <property type="entry name" value="ABCC_Hemolysin"/>
    <property type="match status" value="1"/>
</dbReference>
<dbReference type="CDD" id="cd02417">
    <property type="entry name" value="Peptidase_C39_likeA"/>
    <property type="match status" value="1"/>
</dbReference>
<dbReference type="FunFam" id="3.40.50.300:FF:000299">
    <property type="entry name" value="ABC transporter ATP-binding protein/permease"/>
    <property type="match status" value="1"/>
</dbReference>
<dbReference type="Gene3D" id="1.20.1560.10">
    <property type="entry name" value="ABC transporter type 1, transmembrane domain"/>
    <property type="match status" value="1"/>
</dbReference>
<dbReference type="Gene3D" id="3.90.70.10">
    <property type="entry name" value="Cysteine proteinases"/>
    <property type="match status" value="1"/>
</dbReference>
<dbReference type="Gene3D" id="3.40.50.300">
    <property type="entry name" value="P-loop containing nucleotide triphosphate hydrolases"/>
    <property type="match status" value="1"/>
</dbReference>
<dbReference type="InterPro" id="IPR003593">
    <property type="entry name" value="AAA+_ATPase"/>
</dbReference>
<dbReference type="InterPro" id="IPR011527">
    <property type="entry name" value="ABC1_TM_dom"/>
</dbReference>
<dbReference type="InterPro" id="IPR036640">
    <property type="entry name" value="ABC1_TM_sf"/>
</dbReference>
<dbReference type="InterPro" id="IPR003439">
    <property type="entry name" value="ABC_transporter-like_ATP-bd"/>
</dbReference>
<dbReference type="InterPro" id="IPR017871">
    <property type="entry name" value="ABC_transporter-like_CS"/>
</dbReference>
<dbReference type="InterPro" id="IPR010132">
    <property type="entry name" value="ATPase_T1SS_HlyB"/>
</dbReference>
<dbReference type="InterPro" id="IPR027417">
    <property type="entry name" value="P-loop_NTPase"/>
</dbReference>
<dbReference type="InterPro" id="IPR005074">
    <property type="entry name" value="Peptidase_C39"/>
</dbReference>
<dbReference type="InterPro" id="IPR039395">
    <property type="entry name" value="Peptidase_C39-like_A"/>
</dbReference>
<dbReference type="InterPro" id="IPR039421">
    <property type="entry name" value="Type_1_exporter"/>
</dbReference>
<dbReference type="NCBIfam" id="TIGR01846">
    <property type="entry name" value="type_I_sec_HlyB"/>
    <property type="match status" value="1"/>
</dbReference>
<dbReference type="PANTHER" id="PTHR24221">
    <property type="entry name" value="ATP-BINDING CASSETTE SUB-FAMILY B"/>
    <property type="match status" value="1"/>
</dbReference>
<dbReference type="PANTHER" id="PTHR24221:SF647">
    <property type="entry name" value="BLL6336 PROTEIN"/>
    <property type="match status" value="1"/>
</dbReference>
<dbReference type="Pfam" id="PF00664">
    <property type="entry name" value="ABC_membrane"/>
    <property type="match status" value="1"/>
</dbReference>
<dbReference type="Pfam" id="PF00005">
    <property type="entry name" value="ABC_tran"/>
    <property type="match status" value="1"/>
</dbReference>
<dbReference type="Pfam" id="PF03412">
    <property type="entry name" value="Peptidase_C39"/>
    <property type="match status" value="1"/>
</dbReference>
<dbReference type="SMART" id="SM00382">
    <property type="entry name" value="AAA"/>
    <property type="match status" value="1"/>
</dbReference>
<dbReference type="SUPFAM" id="SSF90123">
    <property type="entry name" value="ABC transporter transmembrane region"/>
    <property type="match status" value="1"/>
</dbReference>
<dbReference type="SUPFAM" id="SSF52540">
    <property type="entry name" value="P-loop containing nucleoside triphosphate hydrolases"/>
    <property type="match status" value="1"/>
</dbReference>
<dbReference type="PROSITE" id="PS50929">
    <property type="entry name" value="ABC_TM1F"/>
    <property type="match status" value="1"/>
</dbReference>
<dbReference type="PROSITE" id="PS00211">
    <property type="entry name" value="ABC_TRANSPORTER_1"/>
    <property type="match status" value="1"/>
</dbReference>
<dbReference type="PROSITE" id="PS50893">
    <property type="entry name" value="ABC_TRANSPORTER_2"/>
    <property type="match status" value="1"/>
</dbReference>
<dbReference type="PROSITE" id="PS50990">
    <property type="entry name" value="PEPTIDASE_C39"/>
    <property type="match status" value="1"/>
</dbReference>
<sequence length="712" mass="77662">MTSPVAQCASVPDSGLLCLVMLARYHGLAADPEQLRHEFAEQAFCSETIQLAARRVGLKVRRHRPAPARLPRAPLPAIALDRQGGYFVLARFEPGADQAVLIQRPGQAPARLGQAEFEALWAGELLLCACAASPTQALARFDFSWFIPALVKHRHLIGEVLLISLVLQFISLLTPLFFQVVMDKVLVNNAMETLNVIAVGFLAAILFEALLTGIRTYLFAHTSSKLDVELGARLYAHLLRLPLAYFQARRVGDSVARVRELEHIRAFLTGNAVTVLLDVVFSVVFIAVMFFYSVKLTLVVLAALPCYFLLSLVLTPVLRRRLDVKFNRGAENQAFLVETVSGIDTVKSLAVEPQWQRNWDRQLAGYVAAGLSVANVAMLANTGVTLISRLVALGVLWVGATEVVAQRMTVGELVAFNMLSGHVTQPVIRLAQLWNDFQQTGVSMQRLGDILNCRTEVAGDKAQLPALRGSIELDRVSFRYRPDAADALRNVSLRIAPGEVVGVVGRSGSGKSTLTRLIQRMFVADRGRVLIDGHDIGIVDSASLRRQLGVVLQESTLFNRSVRDNIALTRPGASMHEVVAAARLAGAHEFICQLPEGYDTMLGENGVGLSGGQRQRIGIARALIHRPRVLILDEATSALDYESEHIIQRNMRDICDGRTVIIIAHRLSAVRCADRIVVMEGGEVAECGSHETLLAAGGLYARLQALQAGEAG</sequence>